<gene>
    <name type="primary">Eif3b</name>
    <name type="synonym">Eif3s9</name>
</gene>
<evidence type="ECO:0000250" key="1">
    <source>
        <dbReference type="UniProtKB" id="P55884"/>
    </source>
</evidence>
<evidence type="ECO:0000255" key="2">
    <source>
        <dbReference type="HAMAP-Rule" id="MF_03001"/>
    </source>
</evidence>
<evidence type="ECO:0000256" key="3">
    <source>
        <dbReference type="SAM" id="MobiDB-lite"/>
    </source>
</evidence>
<evidence type="ECO:0000269" key="4">
    <source>
    </source>
</evidence>
<evidence type="ECO:0000269" key="5">
    <source>
    </source>
</evidence>
<evidence type="ECO:0000269" key="6">
    <source>
    </source>
</evidence>
<evidence type="ECO:0007744" key="7">
    <source>
    </source>
</evidence>
<evidence type="ECO:0007744" key="8">
    <source>
    </source>
</evidence>
<evidence type="ECO:0007744" key="9">
    <source>
    </source>
</evidence>
<evidence type="ECO:0007744" key="10">
    <source>
    </source>
</evidence>
<evidence type="ECO:0007744" key="11">
    <source>
    </source>
</evidence>
<evidence type="ECO:0007744" key="12">
    <source>
    </source>
</evidence>
<evidence type="ECO:0007744" key="13">
    <source>
    </source>
</evidence>
<evidence type="ECO:0007744" key="14">
    <source>
    </source>
</evidence>
<keyword id="KW-0007">Acetylation</keyword>
<keyword id="KW-0963">Cytoplasm</keyword>
<keyword id="KW-0396">Initiation factor</keyword>
<keyword id="KW-0597">Phosphoprotein</keyword>
<keyword id="KW-0648">Protein biosynthesis</keyword>
<keyword id="KW-1185">Reference proteome</keyword>
<keyword id="KW-0677">Repeat</keyword>
<keyword id="KW-0694">RNA-binding</keyword>
<keyword id="KW-0853">WD repeat</keyword>
<dbReference type="EMBL" id="AK033722">
    <property type="protein sequence ID" value="BAC28445.1"/>
    <property type="molecule type" value="mRNA"/>
</dbReference>
<dbReference type="EMBL" id="AK167618">
    <property type="protein sequence ID" value="BAE39671.1"/>
    <property type="molecule type" value="mRNA"/>
</dbReference>
<dbReference type="EMBL" id="AK170938">
    <property type="protein sequence ID" value="BAE42128.1"/>
    <property type="molecule type" value="mRNA"/>
</dbReference>
<dbReference type="EMBL" id="BC007175">
    <property type="protein sequence ID" value="AAH07175.1"/>
    <property type="molecule type" value="mRNA"/>
</dbReference>
<dbReference type="EMBL" id="BC031704">
    <property type="protein sequence ID" value="AAH31704.1"/>
    <property type="molecule type" value="mRNA"/>
</dbReference>
<dbReference type="CCDS" id="CCDS19819.1"/>
<dbReference type="PIR" id="JC7862">
    <property type="entry name" value="JC7862"/>
</dbReference>
<dbReference type="RefSeq" id="NP_598677.1">
    <property type="nucleotide sequence ID" value="NM_133916.2"/>
</dbReference>
<dbReference type="SMR" id="Q8JZQ9"/>
<dbReference type="BioGRID" id="205699">
    <property type="interactions" value="41"/>
</dbReference>
<dbReference type="FunCoup" id="Q8JZQ9">
    <property type="interactions" value="3550"/>
</dbReference>
<dbReference type="IntAct" id="Q8JZQ9">
    <property type="interactions" value="11"/>
</dbReference>
<dbReference type="MINT" id="Q8JZQ9"/>
<dbReference type="STRING" id="10090.ENSMUSP00000098076"/>
<dbReference type="GlyGen" id="Q8JZQ9">
    <property type="glycosylation" value="2 sites, 1 O-linked glycan (1 site)"/>
</dbReference>
<dbReference type="iPTMnet" id="Q8JZQ9"/>
<dbReference type="PhosphoSitePlus" id="Q8JZQ9"/>
<dbReference type="SwissPalm" id="Q8JZQ9"/>
<dbReference type="jPOST" id="Q8JZQ9"/>
<dbReference type="PaxDb" id="10090-ENSMUSP00000098076"/>
<dbReference type="ProteomicsDB" id="275450"/>
<dbReference type="Pumba" id="Q8JZQ9"/>
<dbReference type="Antibodypedia" id="4313">
    <property type="antibodies" value="142 antibodies from 30 providers"/>
</dbReference>
<dbReference type="DNASU" id="27979"/>
<dbReference type="Ensembl" id="ENSMUST00000100507.8">
    <property type="protein sequence ID" value="ENSMUSP00000098076.4"/>
    <property type="gene ID" value="ENSMUSG00000056076.14"/>
</dbReference>
<dbReference type="GeneID" id="27979"/>
<dbReference type="KEGG" id="mmu:27979"/>
<dbReference type="UCSC" id="uc009ahr.1">
    <property type="organism name" value="mouse"/>
</dbReference>
<dbReference type="AGR" id="MGI:106478"/>
<dbReference type="CTD" id="8662"/>
<dbReference type="MGI" id="MGI:106478">
    <property type="gene designation" value="Eif3b"/>
</dbReference>
<dbReference type="VEuPathDB" id="HostDB:ENSMUSG00000056076"/>
<dbReference type="eggNOG" id="KOG2314">
    <property type="taxonomic scope" value="Eukaryota"/>
</dbReference>
<dbReference type="GeneTree" id="ENSGT00550000074913"/>
<dbReference type="HOGENOM" id="CLU_011152_1_0_1"/>
<dbReference type="InParanoid" id="Q8JZQ9"/>
<dbReference type="OMA" id="LWGGPQF"/>
<dbReference type="OrthoDB" id="10250414at2759"/>
<dbReference type="PhylomeDB" id="Q8JZQ9"/>
<dbReference type="TreeFam" id="TF101521"/>
<dbReference type="Reactome" id="R-MMU-156827">
    <property type="pathway name" value="L13a-mediated translational silencing of Ceruloplasmin expression"/>
</dbReference>
<dbReference type="Reactome" id="R-MMU-72649">
    <property type="pathway name" value="Translation initiation complex formation"/>
</dbReference>
<dbReference type="Reactome" id="R-MMU-72689">
    <property type="pathway name" value="Formation of a pool of free 40S subunits"/>
</dbReference>
<dbReference type="Reactome" id="R-MMU-72695">
    <property type="pathway name" value="Formation of the ternary complex, and subsequently, the 43S complex"/>
</dbReference>
<dbReference type="Reactome" id="R-MMU-72702">
    <property type="pathway name" value="Ribosomal scanning and start codon recognition"/>
</dbReference>
<dbReference type="Reactome" id="R-MMU-72706">
    <property type="pathway name" value="GTP hydrolysis and joining of the 60S ribosomal subunit"/>
</dbReference>
<dbReference type="BioGRID-ORCS" id="27979">
    <property type="hits" value="25 hits in 82 CRISPR screens"/>
</dbReference>
<dbReference type="ChiTaRS" id="Eif3b">
    <property type="organism name" value="mouse"/>
</dbReference>
<dbReference type="PRO" id="PR:Q8JZQ9"/>
<dbReference type="Proteomes" id="UP000000589">
    <property type="component" value="Chromosome 5"/>
</dbReference>
<dbReference type="RNAct" id="Q8JZQ9">
    <property type="molecule type" value="protein"/>
</dbReference>
<dbReference type="Bgee" id="ENSMUSG00000056076">
    <property type="expression patterns" value="Expressed in ectoplacental cone and 260 other cell types or tissues"/>
</dbReference>
<dbReference type="ExpressionAtlas" id="Q8JZQ9">
    <property type="expression patterns" value="baseline and differential"/>
</dbReference>
<dbReference type="GO" id="GO:0010494">
    <property type="term" value="C:cytoplasmic stress granule"/>
    <property type="evidence" value="ECO:0000250"/>
    <property type="project" value="UniProtKB"/>
</dbReference>
<dbReference type="GO" id="GO:0016282">
    <property type="term" value="C:eukaryotic 43S preinitiation complex"/>
    <property type="evidence" value="ECO:0007669"/>
    <property type="project" value="UniProtKB-UniRule"/>
</dbReference>
<dbReference type="GO" id="GO:0033290">
    <property type="term" value="C:eukaryotic 48S preinitiation complex"/>
    <property type="evidence" value="ECO:0007669"/>
    <property type="project" value="UniProtKB-UniRule"/>
</dbReference>
<dbReference type="GO" id="GO:0005852">
    <property type="term" value="C:eukaryotic translation initiation factor 3 complex"/>
    <property type="evidence" value="ECO:0000314"/>
    <property type="project" value="UniProtKB"/>
</dbReference>
<dbReference type="GO" id="GO:0071541">
    <property type="term" value="C:eukaryotic translation initiation factor 3 complex, eIF3m"/>
    <property type="evidence" value="ECO:0000314"/>
    <property type="project" value="MGI"/>
</dbReference>
<dbReference type="GO" id="GO:0045202">
    <property type="term" value="C:synapse"/>
    <property type="evidence" value="ECO:0000314"/>
    <property type="project" value="SynGO"/>
</dbReference>
<dbReference type="GO" id="GO:0003723">
    <property type="term" value="F:RNA binding"/>
    <property type="evidence" value="ECO:0007669"/>
    <property type="project" value="UniProtKB-UniRule"/>
</dbReference>
<dbReference type="GO" id="GO:0003743">
    <property type="term" value="F:translation initiation factor activity"/>
    <property type="evidence" value="ECO:0007669"/>
    <property type="project" value="UniProtKB-UniRule"/>
</dbReference>
<dbReference type="GO" id="GO:0031369">
    <property type="term" value="F:translation initiation factor binding"/>
    <property type="evidence" value="ECO:0007669"/>
    <property type="project" value="InterPro"/>
</dbReference>
<dbReference type="GO" id="GO:0001732">
    <property type="term" value="P:formation of cytoplasmic translation initiation complex"/>
    <property type="evidence" value="ECO:0007669"/>
    <property type="project" value="UniProtKB-UniRule"/>
</dbReference>
<dbReference type="GO" id="GO:0075522">
    <property type="term" value="P:IRES-dependent viral translational initiation"/>
    <property type="evidence" value="ECO:0007669"/>
    <property type="project" value="Ensembl"/>
</dbReference>
<dbReference type="GO" id="GO:0006446">
    <property type="term" value="P:regulation of translational initiation"/>
    <property type="evidence" value="ECO:0007669"/>
    <property type="project" value="Ensembl"/>
</dbReference>
<dbReference type="GO" id="GO:0006413">
    <property type="term" value="P:translational initiation"/>
    <property type="evidence" value="ECO:0000314"/>
    <property type="project" value="UniProtKB"/>
</dbReference>
<dbReference type="GO" id="GO:0075525">
    <property type="term" value="P:viral translational termination-reinitiation"/>
    <property type="evidence" value="ECO:0007669"/>
    <property type="project" value="Ensembl"/>
</dbReference>
<dbReference type="CDD" id="cd12278">
    <property type="entry name" value="RRM_eIF3B"/>
    <property type="match status" value="1"/>
</dbReference>
<dbReference type="FunFam" id="2.130.10.10:FF:000489">
    <property type="entry name" value="Eukaryotic translation initiation factor 3 subunit B"/>
    <property type="match status" value="1"/>
</dbReference>
<dbReference type="FunFam" id="2.130.10.10:FF:001855">
    <property type="entry name" value="Eukaryotic translation initiation factor 3 subunit B"/>
    <property type="match status" value="1"/>
</dbReference>
<dbReference type="FunFam" id="3.30.70.330:FF:000164">
    <property type="entry name" value="Eukaryotic translation initiation factor 3 subunit B"/>
    <property type="match status" value="1"/>
</dbReference>
<dbReference type="Gene3D" id="3.30.70.330">
    <property type="match status" value="1"/>
</dbReference>
<dbReference type="Gene3D" id="2.130.10.10">
    <property type="entry name" value="YVTN repeat-like/Quinoprotein amine dehydrogenase"/>
    <property type="match status" value="2"/>
</dbReference>
<dbReference type="HAMAP" id="MF_03001">
    <property type="entry name" value="eIF3b"/>
    <property type="match status" value="1"/>
</dbReference>
<dbReference type="InterPro" id="IPR011400">
    <property type="entry name" value="EIF3B"/>
</dbReference>
<dbReference type="InterPro" id="IPR034363">
    <property type="entry name" value="eIF3B_RRM"/>
</dbReference>
<dbReference type="InterPro" id="IPR012677">
    <property type="entry name" value="Nucleotide-bd_a/b_plait_sf"/>
</dbReference>
<dbReference type="InterPro" id="IPR035979">
    <property type="entry name" value="RBD_domain_sf"/>
</dbReference>
<dbReference type="InterPro" id="IPR000504">
    <property type="entry name" value="RRM_dom"/>
</dbReference>
<dbReference type="InterPro" id="IPR013979">
    <property type="entry name" value="TIF_beta_prop-like"/>
</dbReference>
<dbReference type="InterPro" id="IPR015943">
    <property type="entry name" value="WD40/YVTN_repeat-like_dom_sf"/>
</dbReference>
<dbReference type="PANTHER" id="PTHR14068">
    <property type="entry name" value="EUKARYOTIC TRANSLATION INITIATION FACTOR 3 EIF3 -RELATED"/>
    <property type="match status" value="1"/>
</dbReference>
<dbReference type="PANTHER" id="PTHR14068:SF0">
    <property type="entry name" value="EUKARYOTIC TRANSLATION INITIATION FACTOR 3 SUBUNIT B"/>
    <property type="match status" value="1"/>
</dbReference>
<dbReference type="Pfam" id="PF08662">
    <property type="entry name" value="eIF2A"/>
    <property type="match status" value="1"/>
</dbReference>
<dbReference type="Pfam" id="PF00076">
    <property type="entry name" value="RRM_1"/>
    <property type="match status" value="1"/>
</dbReference>
<dbReference type="PIRSF" id="PIRSF036424">
    <property type="entry name" value="eIF3b"/>
    <property type="match status" value="1"/>
</dbReference>
<dbReference type="SMART" id="SM00360">
    <property type="entry name" value="RRM"/>
    <property type="match status" value="1"/>
</dbReference>
<dbReference type="SUPFAM" id="SSF54928">
    <property type="entry name" value="RNA-binding domain, RBD"/>
    <property type="match status" value="1"/>
</dbReference>
<dbReference type="SUPFAM" id="SSF69322">
    <property type="entry name" value="Tricorn protease domain 2"/>
    <property type="match status" value="1"/>
</dbReference>
<dbReference type="PROSITE" id="PS50102">
    <property type="entry name" value="RRM"/>
    <property type="match status" value="1"/>
</dbReference>
<comment type="function">
    <text evidence="2 4 6">RNA-binding component of the eukaryotic translation initiation factor 3 (eIF-3) complex, which is required for several steps in the initiation of protein synthesis. The eIF-3 complex associates with the 40S ribosome and facilitates the recruitment of eIF-1, eIF-1A, eIF-2:GTP:methionyl-tRNAi and eIF-5 to form the 43S pre-initiation complex (43S PIC). The eIF-3 complex stimulates mRNA recruitment to the 43S PIC and scanning of the mRNA for AUG recognition. The eIF-3 complex is also required for disassembly and recycling of post-termination ribosomal complexes and subsequently prevents premature joining of the 40S and 60S ribosomal subunits prior to initiation. The eIF-3 complex specifically targets and initiates translation of a subset of mRNAs involved in cell proliferation, including cell cycling, differentiation and apoptosis, and uses different modes of RNA stem-loop binding to exert either translational activation or repression.</text>
</comment>
<comment type="subunit">
    <text evidence="1 2 5 6">Component of the eukaryotic translation initiation factor 3 (eIF-3) complex, which is composed of 13 subunits: EIF3A, EIF3B, EIF3C, EIF3D, EIF3E, EIF3F, EIF3G, EIF3H, EIF3I, EIF3J, EIF3K, EIF3L and EIF3M. The eIF-3 complex appears to include 3 stable modules: module A is composed of EIF3A, EIF3B, EIF3G and EIF3I; module B is composed of EIF3F, EIF3H, and EIF3M; and module C is composed of EIF3C, EIF3D, EIF3E, EIF3K and EIF3L. EIF3C of module C binds EIF3B of module A and EIF3H of module B, thereby linking the three modules. EIF3J is a labile subunit that binds to the eIF-3 complex via EIF3B. The eIF-3 complex interacts with RPS6KB1 under conditions of nutrient depletion. Mitogenic stimulation leads to binding and activation of a complex composed of MTOR and RPTOR, leading to phosphorylation and release of RPS6KB1 and binding of EIF4B to eIF-3. Also interacts with UPF2 and HNRPD. Interacts with METTL3. Interacts with DDX3X (By similarity).</text>
</comment>
<comment type="interaction">
    <interactant intactId="EBI-4286513">
        <id>Q8JZQ9</id>
    </interactant>
    <interactant intactId="EBI-8175606">
        <id>Q6NZJ6</id>
        <label>Eif4g1</label>
    </interactant>
    <organismsDiffer>false</organismsDiffer>
    <experiments>2</experiments>
</comment>
<comment type="subcellular location">
    <subcellularLocation>
        <location evidence="2">Cytoplasm</location>
    </subcellularLocation>
    <subcellularLocation>
        <location evidence="1">Cytoplasm</location>
        <location evidence="1">Stress granule</location>
    </subcellularLocation>
    <text evidence="1">Localizes to stress granules following cellular stress.</text>
</comment>
<comment type="tissue specificity">
    <text evidence="4">Ubiquitously expressed.</text>
</comment>
<comment type="domain">
    <text evidence="2">The RRM domain mediates interaction with EIF3J.</text>
</comment>
<comment type="PTM">
    <text evidence="2">Phosphorylated. Phosphorylation is enhanced upon serum stimulation.</text>
</comment>
<comment type="disruption phenotype">
    <text evidence="4">Embryonic death.</text>
</comment>
<comment type="similarity">
    <text evidence="2">Belongs to the eIF-3 subunit B family.</text>
</comment>
<reference key="1">
    <citation type="journal article" date="2002" name="J. Biochem.">
        <title>Embryonic lethality of mutant mice deficient in the p116 gene.</title>
        <authorList>
            <person name="Koyanagi-Katsuta R."/>
            <person name="Akimitsu N."/>
            <person name="Hamamoto H."/>
            <person name="Arimitsu N."/>
            <person name="Hatano T."/>
            <person name="Sekimizu K."/>
        </authorList>
    </citation>
    <scope>NUCLEOTIDE SEQUENCE [MRNA]</scope>
    <scope>FUNCTION</scope>
    <scope>DISRUPTION PHENOTYPE</scope>
    <scope>TISSUE SPECIFICITY</scope>
    <source>
        <tissue>Embryonic stem cell</tissue>
    </source>
</reference>
<reference key="2">
    <citation type="journal article" date="2005" name="Science">
        <title>The transcriptional landscape of the mammalian genome.</title>
        <authorList>
            <person name="Carninci P."/>
            <person name="Kasukawa T."/>
            <person name="Katayama S."/>
            <person name="Gough J."/>
            <person name="Frith M.C."/>
            <person name="Maeda N."/>
            <person name="Oyama R."/>
            <person name="Ravasi T."/>
            <person name="Lenhard B."/>
            <person name="Wells C."/>
            <person name="Kodzius R."/>
            <person name="Shimokawa K."/>
            <person name="Bajic V.B."/>
            <person name="Brenner S.E."/>
            <person name="Batalov S."/>
            <person name="Forrest A.R."/>
            <person name="Zavolan M."/>
            <person name="Davis M.J."/>
            <person name="Wilming L.G."/>
            <person name="Aidinis V."/>
            <person name="Allen J.E."/>
            <person name="Ambesi-Impiombato A."/>
            <person name="Apweiler R."/>
            <person name="Aturaliya R.N."/>
            <person name="Bailey T.L."/>
            <person name="Bansal M."/>
            <person name="Baxter L."/>
            <person name="Beisel K.W."/>
            <person name="Bersano T."/>
            <person name="Bono H."/>
            <person name="Chalk A.M."/>
            <person name="Chiu K.P."/>
            <person name="Choudhary V."/>
            <person name="Christoffels A."/>
            <person name="Clutterbuck D.R."/>
            <person name="Crowe M.L."/>
            <person name="Dalla E."/>
            <person name="Dalrymple B.P."/>
            <person name="de Bono B."/>
            <person name="Della Gatta G."/>
            <person name="di Bernardo D."/>
            <person name="Down T."/>
            <person name="Engstrom P."/>
            <person name="Fagiolini M."/>
            <person name="Faulkner G."/>
            <person name="Fletcher C.F."/>
            <person name="Fukushima T."/>
            <person name="Furuno M."/>
            <person name="Futaki S."/>
            <person name="Gariboldi M."/>
            <person name="Georgii-Hemming P."/>
            <person name="Gingeras T.R."/>
            <person name="Gojobori T."/>
            <person name="Green R.E."/>
            <person name="Gustincich S."/>
            <person name="Harbers M."/>
            <person name="Hayashi Y."/>
            <person name="Hensch T.K."/>
            <person name="Hirokawa N."/>
            <person name="Hill D."/>
            <person name="Huminiecki L."/>
            <person name="Iacono M."/>
            <person name="Ikeo K."/>
            <person name="Iwama A."/>
            <person name="Ishikawa T."/>
            <person name="Jakt M."/>
            <person name="Kanapin A."/>
            <person name="Katoh M."/>
            <person name="Kawasawa Y."/>
            <person name="Kelso J."/>
            <person name="Kitamura H."/>
            <person name="Kitano H."/>
            <person name="Kollias G."/>
            <person name="Krishnan S.P."/>
            <person name="Kruger A."/>
            <person name="Kummerfeld S.K."/>
            <person name="Kurochkin I.V."/>
            <person name="Lareau L.F."/>
            <person name="Lazarevic D."/>
            <person name="Lipovich L."/>
            <person name="Liu J."/>
            <person name="Liuni S."/>
            <person name="McWilliam S."/>
            <person name="Madan Babu M."/>
            <person name="Madera M."/>
            <person name="Marchionni L."/>
            <person name="Matsuda H."/>
            <person name="Matsuzawa S."/>
            <person name="Miki H."/>
            <person name="Mignone F."/>
            <person name="Miyake S."/>
            <person name="Morris K."/>
            <person name="Mottagui-Tabar S."/>
            <person name="Mulder N."/>
            <person name="Nakano N."/>
            <person name="Nakauchi H."/>
            <person name="Ng P."/>
            <person name="Nilsson R."/>
            <person name="Nishiguchi S."/>
            <person name="Nishikawa S."/>
            <person name="Nori F."/>
            <person name="Ohara O."/>
            <person name="Okazaki Y."/>
            <person name="Orlando V."/>
            <person name="Pang K.C."/>
            <person name="Pavan W.J."/>
            <person name="Pavesi G."/>
            <person name="Pesole G."/>
            <person name="Petrovsky N."/>
            <person name="Piazza S."/>
            <person name="Reed J."/>
            <person name="Reid J.F."/>
            <person name="Ring B.Z."/>
            <person name="Ringwald M."/>
            <person name="Rost B."/>
            <person name="Ruan Y."/>
            <person name="Salzberg S.L."/>
            <person name="Sandelin A."/>
            <person name="Schneider C."/>
            <person name="Schoenbach C."/>
            <person name="Sekiguchi K."/>
            <person name="Semple C.A."/>
            <person name="Seno S."/>
            <person name="Sessa L."/>
            <person name="Sheng Y."/>
            <person name="Shibata Y."/>
            <person name="Shimada H."/>
            <person name="Shimada K."/>
            <person name="Silva D."/>
            <person name="Sinclair B."/>
            <person name="Sperling S."/>
            <person name="Stupka E."/>
            <person name="Sugiura K."/>
            <person name="Sultana R."/>
            <person name="Takenaka Y."/>
            <person name="Taki K."/>
            <person name="Tammoja K."/>
            <person name="Tan S.L."/>
            <person name="Tang S."/>
            <person name="Taylor M.S."/>
            <person name="Tegner J."/>
            <person name="Teichmann S.A."/>
            <person name="Ueda H.R."/>
            <person name="van Nimwegen E."/>
            <person name="Verardo R."/>
            <person name="Wei C.L."/>
            <person name="Yagi K."/>
            <person name="Yamanishi H."/>
            <person name="Zabarovsky E."/>
            <person name="Zhu S."/>
            <person name="Zimmer A."/>
            <person name="Hide W."/>
            <person name="Bult C."/>
            <person name="Grimmond S.M."/>
            <person name="Teasdale R.D."/>
            <person name="Liu E.T."/>
            <person name="Brusic V."/>
            <person name="Quackenbush J."/>
            <person name="Wahlestedt C."/>
            <person name="Mattick J.S."/>
            <person name="Hume D.A."/>
            <person name="Kai C."/>
            <person name="Sasaki D."/>
            <person name="Tomaru Y."/>
            <person name="Fukuda S."/>
            <person name="Kanamori-Katayama M."/>
            <person name="Suzuki M."/>
            <person name="Aoki J."/>
            <person name="Arakawa T."/>
            <person name="Iida J."/>
            <person name="Imamura K."/>
            <person name="Itoh M."/>
            <person name="Kato T."/>
            <person name="Kawaji H."/>
            <person name="Kawagashira N."/>
            <person name="Kawashima T."/>
            <person name="Kojima M."/>
            <person name="Kondo S."/>
            <person name="Konno H."/>
            <person name="Nakano K."/>
            <person name="Ninomiya N."/>
            <person name="Nishio T."/>
            <person name="Okada M."/>
            <person name="Plessy C."/>
            <person name="Shibata K."/>
            <person name="Shiraki T."/>
            <person name="Suzuki S."/>
            <person name="Tagami M."/>
            <person name="Waki K."/>
            <person name="Watahiki A."/>
            <person name="Okamura-Oho Y."/>
            <person name="Suzuki H."/>
            <person name="Kawai J."/>
            <person name="Hayashizaki Y."/>
        </authorList>
    </citation>
    <scope>NUCLEOTIDE SEQUENCE [LARGE SCALE MRNA]</scope>
    <source>
        <strain>C57BL/6J</strain>
        <strain>NOD</strain>
        <tissue>Cecum</tissue>
        <tissue>Placenta</tissue>
    </source>
</reference>
<reference key="3">
    <citation type="journal article" date="2004" name="Genome Res.">
        <title>The status, quality, and expansion of the NIH full-length cDNA project: the Mammalian Gene Collection (MGC).</title>
        <authorList>
            <consortium name="The MGC Project Team"/>
        </authorList>
    </citation>
    <scope>NUCLEOTIDE SEQUENCE [LARGE SCALE MRNA]</scope>
    <source>
        <strain>Czech II</strain>
        <strain>FVB/N</strain>
        <tissue>Mammary tumor</tissue>
    </source>
</reference>
<reference key="4">
    <citation type="journal article" date="2004" name="Mol. Cell. Proteomics">
        <title>Phosphoproteomic analysis of the developing mouse brain.</title>
        <authorList>
            <person name="Ballif B.A."/>
            <person name="Villen J."/>
            <person name="Beausoleil S.A."/>
            <person name="Schwartz D."/>
            <person name="Gygi S.P."/>
        </authorList>
    </citation>
    <scope>PHOSPHORYLATION [LARGE SCALE ANALYSIS] AT THR-31</scope>
    <scope>IDENTIFICATION BY MASS SPECTROMETRY [LARGE SCALE ANALYSIS]</scope>
    <source>
        <tissue>Embryonic brain</tissue>
    </source>
</reference>
<reference key="5">
    <citation type="journal article" date="2006" name="EMBO J.">
        <title>mTOR-dependent stimulation of the association of eIF4G and eIF3 by insulin.</title>
        <authorList>
            <person name="Harris T.E."/>
            <person name="Chi A."/>
            <person name="Shabanowitz J."/>
            <person name="Hunt D.F."/>
            <person name="Rhoads R.E."/>
            <person name="Lawrence J.C. Jr."/>
        </authorList>
    </citation>
    <scope>INTERACTION WITH EIF3A; EIF3F; EIF3J; EIF4A1; EIF4B; EIF4E; EIF4G1 AND RPS6</scope>
</reference>
<reference key="6">
    <citation type="journal article" date="2006" name="Mol. Cell. Proteomics">
        <title>Comprehensive identification of phosphorylation sites in postsynaptic density preparations.</title>
        <authorList>
            <person name="Trinidad J.C."/>
            <person name="Specht C.G."/>
            <person name="Thalhammer A."/>
            <person name="Schoepfer R."/>
            <person name="Burlingame A.L."/>
        </authorList>
    </citation>
    <scope>PHOSPHORYLATION [LARGE SCALE ANALYSIS] AT SER-120</scope>
    <scope>IDENTIFICATION BY MASS SPECTROMETRY [LARGE SCALE ANALYSIS]</scope>
    <source>
        <tissue>Brain</tissue>
    </source>
</reference>
<reference key="7">
    <citation type="journal article" date="2007" name="EMBO J.">
        <title>Reconstitution reveals the functional core of mammalian eIF3.</title>
        <authorList>
            <person name="Masutani M."/>
            <person name="Sonenberg N."/>
            <person name="Yokoyama S."/>
            <person name="Imataka H."/>
        </authorList>
    </citation>
    <scope>FUNCTION</scope>
    <scope>CHARACTERIZATION OF THE EIF-3 COMPLEX</scope>
    <scope>IDENTIFICATION IN THE EIF-3 COMPLEX</scope>
    <scope>IDENTIFICATION BY MASS SPECTROMETRY</scope>
</reference>
<reference key="8">
    <citation type="journal article" date="2007" name="J. Proteome Res.">
        <title>A differential phosphoproteomic analysis of retinoic acid-treated P19 cells.</title>
        <authorList>
            <person name="Smith J.C."/>
            <person name="Duchesne M.A."/>
            <person name="Tozzi P."/>
            <person name="Ethier M."/>
            <person name="Figeys D."/>
        </authorList>
    </citation>
    <scope>PHOSPHORYLATION [LARGE SCALE ANALYSIS] AT SER-120 AND SER-123</scope>
    <scope>IDENTIFICATION BY MASS SPECTROMETRY [LARGE SCALE ANALYSIS]</scope>
    <source>
        <tissue>Teratocarcinoma</tissue>
    </source>
</reference>
<reference key="9">
    <citation type="journal article" date="2007" name="Proc. Natl. Acad. Sci. U.S.A.">
        <title>Large-scale phosphorylation analysis of mouse liver.</title>
        <authorList>
            <person name="Villen J."/>
            <person name="Beausoleil S.A."/>
            <person name="Gerber S.A."/>
            <person name="Gygi S.P."/>
        </authorList>
    </citation>
    <scope>PHOSPHORYLATION [LARGE SCALE ANALYSIS] AT SER-68; THR-74; SER-75; SER-79; SER-90; SER-120 AND SER-123</scope>
    <scope>IDENTIFICATION BY MASS SPECTROMETRY [LARGE SCALE ANALYSIS]</scope>
    <source>
        <tissue>Liver</tissue>
    </source>
</reference>
<reference key="10">
    <citation type="journal article" date="2008" name="J. Proteome Res.">
        <title>Specific phosphopeptide enrichment with immobilized titanium ion affinity chromatography adsorbent for phosphoproteome analysis.</title>
        <authorList>
            <person name="Zhou H."/>
            <person name="Ye M."/>
            <person name="Dong J."/>
            <person name="Han G."/>
            <person name="Jiang X."/>
            <person name="Wu R."/>
            <person name="Zou H."/>
        </authorList>
    </citation>
    <scope>PHOSPHORYLATION [LARGE SCALE ANALYSIS] AT SER-79; SER-120 AND SER-123</scope>
    <scope>IDENTIFICATION BY MASS SPECTROMETRY [LARGE SCALE ANALYSIS]</scope>
    <source>
        <tissue>Liver</tissue>
    </source>
</reference>
<reference key="11">
    <citation type="journal article" date="2009" name="Immunity">
        <title>The phagosomal proteome in interferon-gamma-activated macrophages.</title>
        <authorList>
            <person name="Trost M."/>
            <person name="English L."/>
            <person name="Lemieux S."/>
            <person name="Courcelles M."/>
            <person name="Desjardins M."/>
            <person name="Thibault P."/>
        </authorList>
    </citation>
    <scope>PHOSPHORYLATION [LARGE SCALE ANALYSIS] AT SER-75 AND SER-79</scope>
    <scope>IDENTIFICATION BY MASS SPECTROMETRY [LARGE SCALE ANALYSIS]</scope>
</reference>
<reference key="12">
    <citation type="journal article" date="2009" name="Mol. Cell. Proteomics">
        <title>Large scale localization of protein phosphorylation by use of electron capture dissociation mass spectrometry.</title>
        <authorList>
            <person name="Sweet S.M."/>
            <person name="Bailey C.M."/>
            <person name="Cunningham D.L."/>
            <person name="Heath J.K."/>
            <person name="Cooper H.J."/>
        </authorList>
    </citation>
    <scope>PHOSPHORYLATION [LARGE SCALE ANALYSIS] AT THR-74; SER-75; SER-79; SER-120 AND SER-123</scope>
    <scope>IDENTIFICATION BY MASS SPECTROMETRY [LARGE SCALE ANALYSIS]</scope>
    <source>
        <tissue>Embryonic fibroblast</tissue>
    </source>
</reference>
<reference key="13">
    <citation type="journal article" date="2010" name="Cell">
        <title>A tissue-specific atlas of mouse protein phosphorylation and expression.</title>
        <authorList>
            <person name="Huttlin E.L."/>
            <person name="Jedrychowski M.P."/>
            <person name="Elias J.E."/>
            <person name="Goswami T."/>
            <person name="Rad R."/>
            <person name="Beausoleil S.A."/>
            <person name="Villen J."/>
            <person name="Haas W."/>
            <person name="Sowa M.E."/>
            <person name="Gygi S.P."/>
        </authorList>
    </citation>
    <scope>PHOSPHORYLATION [LARGE SCALE ANALYSIS] AT SER-37; SER-40; SER-68; THR-72; SER-75; SER-79; SER-84; SER-88; SER-111; SER-120 AND SER-123</scope>
    <scope>IDENTIFICATION BY MASS SPECTROMETRY [LARGE SCALE ANALYSIS]</scope>
    <source>
        <tissue>Brain</tissue>
        <tissue>Brown adipose tissue</tissue>
        <tissue>Heart</tissue>
        <tissue>Kidney</tissue>
        <tissue>Liver</tissue>
        <tissue>Lung</tissue>
        <tissue>Pancreas</tissue>
        <tissue>Spleen</tissue>
        <tissue>Testis</tissue>
    </source>
</reference>
<proteinExistence type="evidence at protein level"/>
<feature type="chain" id="PRO_0000223479" description="Eukaryotic translation initiation factor 3 subunit B">
    <location>
        <begin position="1"/>
        <end position="803"/>
    </location>
</feature>
<feature type="domain" description="RRM" evidence="2">
    <location>
        <begin position="174"/>
        <end position="257"/>
    </location>
</feature>
<feature type="repeat" description="WD 1">
    <location>
        <begin position="321"/>
        <end position="359"/>
    </location>
</feature>
<feature type="repeat" description="WD 2">
    <location>
        <begin position="361"/>
        <end position="406"/>
    </location>
</feature>
<feature type="repeat" description="WD 3">
    <location>
        <begin position="410"/>
        <end position="448"/>
    </location>
</feature>
<feature type="repeat" description="WD 4">
    <location>
        <begin position="549"/>
        <end position="590"/>
    </location>
</feature>
<feature type="repeat" description="WD 5">
    <location>
        <begin position="638"/>
        <end position="683"/>
    </location>
</feature>
<feature type="region of interest" description="Disordered" evidence="3">
    <location>
        <begin position="1"/>
        <end position="147"/>
    </location>
</feature>
<feature type="region of interest" description="Sufficient for interaction with EIF3E" evidence="2">
    <location>
        <begin position="113"/>
        <end position="402"/>
    </location>
</feature>
<feature type="region of interest" description="Sufficient for interaction with EIF3J" evidence="2">
    <location>
        <begin position="159"/>
        <end position="263"/>
    </location>
</feature>
<feature type="compositionally biased region" description="Low complexity" evidence="3">
    <location>
        <begin position="1"/>
        <end position="11"/>
    </location>
</feature>
<feature type="compositionally biased region" description="Acidic residues" evidence="3">
    <location>
        <begin position="44"/>
        <end position="56"/>
    </location>
</feature>
<feature type="compositionally biased region" description="Polar residues" evidence="3">
    <location>
        <begin position="73"/>
        <end position="93"/>
    </location>
</feature>
<feature type="compositionally biased region" description="Acidic residues" evidence="3">
    <location>
        <begin position="135"/>
        <end position="147"/>
    </location>
</feature>
<feature type="modified residue" description="N-acetylmethionine" evidence="1 2">
    <location>
        <position position="1"/>
    </location>
</feature>
<feature type="modified residue" description="Phosphothreonine" evidence="7">
    <location>
        <position position="31"/>
    </location>
</feature>
<feature type="modified residue" description="Phosphoserine" evidence="14">
    <location>
        <position position="37"/>
    </location>
</feature>
<feature type="modified residue" description="Phosphoserine" evidence="14">
    <location>
        <position position="40"/>
    </location>
</feature>
<feature type="modified residue" description="Phosphoserine" evidence="9 14">
    <location>
        <position position="68"/>
    </location>
</feature>
<feature type="modified residue" description="Phosphothreonine" evidence="14">
    <location>
        <position position="72"/>
    </location>
</feature>
<feature type="modified residue" description="Phosphothreonine" evidence="9 12">
    <location>
        <position position="74"/>
    </location>
</feature>
<feature type="modified residue" description="Phosphoserine" evidence="9 12 13 14">
    <location>
        <position position="75"/>
    </location>
</feature>
<feature type="modified residue" description="Phosphoserine" evidence="9 11 12 13 14">
    <location>
        <position position="79"/>
    </location>
</feature>
<feature type="modified residue" description="Phosphoserine" evidence="14">
    <location>
        <position position="84"/>
    </location>
</feature>
<feature type="modified residue" description="Phosphoserine" evidence="14">
    <location>
        <position position="88"/>
    </location>
</feature>
<feature type="modified residue" description="Phosphoserine" evidence="9">
    <location>
        <position position="90"/>
    </location>
</feature>
<feature type="modified residue" description="Phosphoserine" evidence="14">
    <location>
        <position position="111"/>
    </location>
</feature>
<feature type="modified residue" description="Phosphoserine" evidence="8 9 10 11 12 14">
    <location>
        <position position="120"/>
    </location>
</feature>
<feature type="modified residue" description="Phosphoserine" evidence="9 10 11 12 14">
    <location>
        <position position="123"/>
    </location>
</feature>
<feature type="modified residue" description="Phosphoserine" evidence="1 2">
    <location>
        <position position="141"/>
    </location>
</feature>
<feature type="modified residue" description="Phosphoserine" evidence="1 2">
    <location>
        <position position="143"/>
    </location>
</feature>
<feature type="modified residue" description="Phosphoserine" evidence="1 2">
    <location>
        <position position="153"/>
    </location>
</feature>
<feature type="modified residue" description="N6-acetyllysine" evidence="1">
    <location>
        <position position="198"/>
    </location>
</feature>
<feature type="modified residue" description="Phosphoserine" evidence="1 2">
    <location>
        <position position="228"/>
    </location>
</feature>
<feature type="modified residue" description="N6-acetyllysine" evidence="1">
    <location>
        <position position="277"/>
    </location>
</feature>
<feature type="modified residue" description="N6-acetyllysine" evidence="1">
    <location>
        <position position="353"/>
    </location>
</feature>
<sequence length="803" mass="91370">MQDAENVAVPEAAEERAEPARQQPASESPPTDEAAGSGGSEVGQTEDAEEDAEAGPEPEVRAKPAAQSEEETATSPAASPTPQSAERSPSQEPSAPGKAEAVGEQARGHPSAGAEEEGGSDGSAAEAEPRALENGEADEPSFSDPEDFVDDVSEEELLGDVLKDRPQEADGIDSVIVVDNVPQVGPDRLEKLKNVIHKIFSKFGKIINDYYPEEDGKTKGYIFLEYASPAHAVDAVKNADGYKLDKQHTFRVNLFTDFDKYMTISDEWDIPEKQPFKDLGNLRYWLEEAECRDQYSVIFESGDRTSIFWNDVKDPVSIEERARWTETYVRWSPKGTYLATFHQRGIALWGGDKFKQIQRFSHQGVQLIDFSPCERYLVTFSPLMDTQDDPQAIIIWDILTGHKKRGFHCESSAHWPIFKWSHDGKFFARMTLDTLSIYETPSMGLLDKKSLKISGIKDFSWSPGGNIIAFWVPEDKDIPARVTLMQLPTRQEIRVRNLFNVVDCKLHWQKNGDYLCVKVDRTPKGTQGVVTNFEIFRMREKQVPVDVVEMKETIIAFAWEPNGSKFAVLHGEAPRISVSFYHVKSNGKIELIKMFDKQQANTIFWSPQGQFVVLAGLRSMNGALAFVDTSDCTVMNIAEHYMASDVEWDPTGRYVVTSVSWWSHKVDNAYWLWTFQGRLLQKNNKDRFCQLLWRPRPPTLLSQDQIKQIKKDLKKYSKIFEQKDRLSQSKASKELVERRRTMMEDFRQYRKMAQELYMKQKNERLELRGGVDTDELDSNVDDWEEETIEFFVTEEVIPLGSQE</sequence>
<name>EIF3B_MOUSE</name>
<organism>
    <name type="scientific">Mus musculus</name>
    <name type="common">Mouse</name>
    <dbReference type="NCBI Taxonomy" id="10090"/>
    <lineage>
        <taxon>Eukaryota</taxon>
        <taxon>Metazoa</taxon>
        <taxon>Chordata</taxon>
        <taxon>Craniata</taxon>
        <taxon>Vertebrata</taxon>
        <taxon>Euteleostomi</taxon>
        <taxon>Mammalia</taxon>
        <taxon>Eutheria</taxon>
        <taxon>Euarchontoglires</taxon>
        <taxon>Glires</taxon>
        <taxon>Rodentia</taxon>
        <taxon>Myomorpha</taxon>
        <taxon>Muroidea</taxon>
        <taxon>Muridae</taxon>
        <taxon>Murinae</taxon>
        <taxon>Mus</taxon>
        <taxon>Mus</taxon>
    </lineage>
</organism>
<accession>Q8JZQ9</accession>
<accession>Q922K2</accession>
<protein>
    <recommendedName>
        <fullName evidence="2">Eukaryotic translation initiation factor 3 subunit B</fullName>
        <shortName evidence="2">eIF3b</shortName>
    </recommendedName>
    <alternativeName>
        <fullName evidence="2">Eukaryotic translation initiation factor 3 subunit 9</fullName>
    </alternativeName>
    <alternativeName>
        <fullName evidence="2">eIF-3-eta</fullName>
    </alternativeName>
    <alternativeName>
        <fullName>eIF3 p116</fullName>
    </alternativeName>
</protein>